<proteinExistence type="inferred from homology"/>
<accession>B0BC25</accession>
<comment type="function">
    <text evidence="1">Involved in the synthesis of meso-diaminopimelate (m-DAP or DL-DAP), required for both lysine and peptidoglycan biosynthesis. Catalyzes the direct conversion of tetrahydrodipicolinate to LL-diaminopimelate.</text>
</comment>
<comment type="catalytic activity">
    <reaction evidence="1">
        <text>(2S,6S)-2,6-diaminopimelate + 2-oxoglutarate = (S)-2,3,4,5-tetrahydrodipicolinate + L-glutamate + H2O + H(+)</text>
        <dbReference type="Rhea" id="RHEA:23988"/>
        <dbReference type="ChEBI" id="CHEBI:15377"/>
        <dbReference type="ChEBI" id="CHEBI:15378"/>
        <dbReference type="ChEBI" id="CHEBI:16810"/>
        <dbReference type="ChEBI" id="CHEBI:16845"/>
        <dbReference type="ChEBI" id="CHEBI:29985"/>
        <dbReference type="ChEBI" id="CHEBI:57609"/>
        <dbReference type="EC" id="2.6.1.83"/>
    </reaction>
</comment>
<comment type="cofactor">
    <cofactor evidence="1">
        <name>pyridoxal 5'-phosphate</name>
        <dbReference type="ChEBI" id="CHEBI:597326"/>
    </cofactor>
</comment>
<comment type="pathway">
    <text evidence="1">Amino-acid biosynthesis; L-lysine biosynthesis via DAP pathway; LL-2,6-diaminopimelate from (S)-tetrahydrodipicolinate (aminotransferase route): step 1/1.</text>
</comment>
<comment type="subunit">
    <text evidence="1">Homodimer.</text>
</comment>
<comment type="similarity">
    <text evidence="1">Belongs to the class-I pyridoxal-phosphate-dependent aminotransferase family. LL-diaminopimelate aminotransferase subfamily.</text>
</comment>
<gene>
    <name evidence="1" type="primary">dapL</name>
    <name type="ordered locus">CTLon_0643</name>
</gene>
<keyword id="KW-0032">Aminotransferase</keyword>
<keyword id="KW-0663">Pyridoxal phosphate</keyword>
<keyword id="KW-0808">Transferase</keyword>
<protein>
    <recommendedName>
        <fullName evidence="1">LL-diaminopimelate aminotransferase</fullName>
        <shortName evidence="1">DAP-AT</shortName>
        <shortName evidence="1">DAP-aminotransferase</shortName>
        <shortName evidence="1">LL-DAP-aminotransferase</shortName>
        <ecNumber evidence="1">2.6.1.83</ecNumber>
    </recommendedName>
</protein>
<sequence length="394" mass="43769">MKRNPHFVSLTKNYLFADLQKRVAQFRLENPQHTVINLSIGDTTQPLNASVAEAFASSIARLSSPTTCRGYGPDFGLPALRQKLSEDFYRGCVDAKEIFISDGAKADLFRLLSFFGPNQTVAIQDPSYPAYLDIARLTGAKEIIALPCLQENAFFPEFPEDTHIDILCLCSPNNPTGTVLNKDQLRAIVHYAIEHEILILFDAAYSTFISDPSLPKSIFEIPDARFCAIEINSFSKPLGFAGIRLGWTVIPQELTYADGHFVIQDWERFLSTTFNGASIPAQEAGVAGLSILPQLEAIHYYRENSDLLRKALLATGFEVFGGEHAPYLWVKPTQANISDRDLFDFFLREYHIAITPGIGFGRSGSGFVRFSSLGKREDILAACERLQMAPALQS</sequence>
<reference key="1">
    <citation type="journal article" date="2008" name="Genome Res.">
        <title>Chlamydia trachomatis: genome sequence analysis of lymphogranuloma venereum isolates.</title>
        <authorList>
            <person name="Thomson N.R."/>
            <person name="Holden M.T.G."/>
            <person name="Carder C."/>
            <person name="Lennard N."/>
            <person name="Lockey S.J."/>
            <person name="Marsh P."/>
            <person name="Skipp P."/>
            <person name="O'Connor C.D."/>
            <person name="Goodhead I."/>
            <person name="Norbertzcak H."/>
            <person name="Harris B."/>
            <person name="Ormond D."/>
            <person name="Rance R."/>
            <person name="Quail M.A."/>
            <person name="Parkhill J."/>
            <person name="Stephens R.S."/>
            <person name="Clarke I.N."/>
        </authorList>
    </citation>
    <scope>NUCLEOTIDE SEQUENCE [LARGE SCALE GENOMIC DNA]</scope>
    <source>
        <strain>UCH-1/proctitis</strain>
    </source>
</reference>
<feature type="chain" id="PRO_0000342222" description="LL-diaminopimelate aminotransferase">
    <location>
        <begin position="1"/>
        <end position="394"/>
    </location>
</feature>
<feature type="binding site" evidence="1">
    <location>
        <position position="14"/>
    </location>
    <ligand>
        <name>substrate</name>
    </ligand>
</feature>
<feature type="binding site" evidence="1">
    <location>
        <position position="41"/>
    </location>
    <ligand>
        <name>substrate</name>
    </ligand>
</feature>
<feature type="binding site" evidence="1">
    <location>
        <position position="71"/>
    </location>
    <ligand>
        <name>pyridoxal 5'-phosphate</name>
        <dbReference type="ChEBI" id="CHEBI:597326"/>
    </ligand>
</feature>
<feature type="binding site" evidence="1">
    <location>
        <begin position="104"/>
        <end position="105"/>
    </location>
    <ligand>
        <name>pyridoxal 5'-phosphate</name>
        <dbReference type="ChEBI" id="CHEBI:597326"/>
    </ligand>
</feature>
<feature type="binding site" evidence="1">
    <location>
        <position position="105"/>
    </location>
    <ligand>
        <name>substrate</name>
    </ligand>
</feature>
<feature type="binding site" evidence="1">
    <location>
        <position position="128"/>
    </location>
    <ligand>
        <name>pyridoxal 5'-phosphate</name>
        <dbReference type="ChEBI" id="CHEBI:597326"/>
    </ligand>
</feature>
<feature type="binding site" evidence="1">
    <location>
        <position position="128"/>
    </location>
    <ligand>
        <name>substrate</name>
    </ligand>
</feature>
<feature type="binding site" evidence="1">
    <location>
        <position position="174"/>
    </location>
    <ligand>
        <name>pyridoxal 5'-phosphate</name>
        <dbReference type="ChEBI" id="CHEBI:597326"/>
    </ligand>
</feature>
<feature type="binding site" evidence="1">
    <location>
        <position position="174"/>
    </location>
    <ligand>
        <name>substrate</name>
    </ligand>
</feature>
<feature type="binding site" evidence="1">
    <location>
        <position position="205"/>
    </location>
    <ligand>
        <name>pyridoxal 5'-phosphate</name>
        <dbReference type="ChEBI" id="CHEBI:597326"/>
    </ligand>
</feature>
<feature type="binding site" evidence="1">
    <location>
        <begin position="233"/>
        <end position="235"/>
    </location>
    <ligand>
        <name>pyridoxal 5'-phosphate</name>
        <dbReference type="ChEBI" id="CHEBI:597326"/>
    </ligand>
</feature>
<feature type="binding site" evidence="1">
    <location>
        <position position="244"/>
    </location>
    <ligand>
        <name>pyridoxal 5'-phosphate</name>
        <dbReference type="ChEBI" id="CHEBI:597326"/>
    </ligand>
</feature>
<feature type="binding site" evidence="1">
    <location>
        <position position="275"/>
    </location>
    <ligand>
        <name>pyridoxal 5'-phosphate</name>
        <dbReference type="ChEBI" id="CHEBI:597326"/>
    </ligand>
</feature>
<feature type="binding site" evidence="1">
    <location>
        <position position="275"/>
    </location>
    <ligand>
        <name>substrate</name>
    </ligand>
</feature>
<feature type="binding site" evidence="1">
    <location>
        <position position="369"/>
    </location>
    <ligand>
        <name>substrate</name>
    </ligand>
</feature>
<feature type="modified residue" description="N6-(pyridoxal phosphate)lysine" evidence="1">
    <location>
        <position position="236"/>
    </location>
</feature>
<organism>
    <name type="scientific">Chlamydia trachomatis serovar L2b (strain UCH-1/proctitis)</name>
    <dbReference type="NCBI Taxonomy" id="471473"/>
    <lineage>
        <taxon>Bacteria</taxon>
        <taxon>Pseudomonadati</taxon>
        <taxon>Chlamydiota</taxon>
        <taxon>Chlamydiia</taxon>
        <taxon>Chlamydiales</taxon>
        <taxon>Chlamydiaceae</taxon>
        <taxon>Chlamydia/Chlamydophila group</taxon>
        <taxon>Chlamydia</taxon>
    </lineage>
</organism>
<dbReference type="EC" id="2.6.1.83" evidence="1"/>
<dbReference type="EMBL" id="AM884177">
    <property type="protein sequence ID" value="CAP07040.1"/>
    <property type="molecule type" value="Genomic_DNA"/>
</dbReference>
<dbReference type="RefSeq" id="WP_009873777.1">
    <property type="nucleotide sequence ID" value="NC_010280.2"/>
</dbReference>
<dbReference type="SMR" id="B0BC25"/>
<dbReference type="KEGG" id="ctl:CTLon_0643"/>
<dbReference type="HOGENOM" id="CLU_051433_0_0_0"/>
<dbReference type="UniPathway" id="UPA00034">
    <property type="reaction ID" value="UER00466"/>
</dbReference>
<dbReference type="Proteomes" id="UP001154401">
    <property type="component" value="Chromosome"/>
</dbReference>
<dbReference type="GO" id="GO:0010285">
    <property type="term" value="F:L,L-diaminopimelate aminotransferase activity"/>
    <property type="evidence" value="ECO:0007669"/>
    <property type="project" value="UniProtKB-UniRule"/>
</dbReference>
<dbReference type="GO" id="GO:0030170">
    <property type="term" value="F:pyridoxal phosphate binding"/>
    <property type="evidence" value="ECO:0007669"/>
    <property type="project" value="UniProtKB-UniRule"/>
</dbReference>
<dbReference type="GO" id="GO:0033362">
    <property type="term" value="P:lysine biosynthetic process via diaminopimelate, diaminopimelate-aminotransferase pathway"/>
    <property type="evidence" value="ECO:0007669"/>
    <property type="project" value="UniProtKB-UniRule"/>
</dbReference>
<dbReference type="CDD" id="cd00609">
    <property type="entry name" value="AAT_like"/>
    <property type="match status" value="1"/>
</dbReference>
<dbReference type="FunFam" id="3.40.640.10:FF:000099">
    <property type="entry name" value="LL-diaminopimelate aminotransferase, chloroplastic"/>
    <property type="match status" value="1"/>
</dbReference>
<dbReference type="Gene3D" id="3.90.1150.10">
    <property type="entry name" value="Aspartate Aminotransferase, domain 1"/>
    <property type="match status" value="1"/>
</dbReference>
<dbReference type="Gene3D" id="3.40.640.10">
    <property type="entry name" value="Type I PLP-dependent aspartate aminotransferase-like (Major domain)"/>
    <property type="match status" value="1"/>
</dbReference>
<dbReference type="HAMAP" id="MF_01642">
    <property type="entry name" value="DapL_aminotrans_1"/>
    <property type="match status" value="1"/>
</dbReference>
<dbReference type="InterPro" id="IPR004839">
    <property type="entry name" value="Aminotransferase_I/II_large"/>
</dbReference>
<dbReference type="InterPro" id="IPR019942">
    <property type="entry name" value="DapL/ALD1"/>
</dbReference>
<dbReference type="InterPro" id="IPR004838">
    <property type="entry name" value="NHTrfase_class1_PyrdxlP-BS"/>
</dbReference>
<dbReference type="InterPro" id="IPR015424">
    <property type="entry name" value="PyrdxlP-dep_Trfase"/>
</dbReference>
<dbReference type="InterPro" id="IPR015421">
    <property type="entry name" value="PyrdxlP-dep_Trfase_major"/>
</dbReference>
<dbReference type="InterPro" id="IPR015422">
    <property type="entry name" value="PyrdxlP-dep_Trfase_small"/>
</dbReference>
<dbReference type="NCBIfam" id="TIGR03542">
    <property type="entry name" value="DAPAT_plant"/>
    <property type="match status" value="1"/>
</dbReference>
<dbReference type="PANTHER" id="PTHR43144">
    <property type="entry name" value="AMINOTRANSFERASE"/>
    <property type="match status" value="1"/>
</dbReference>
<dbReference type="Pfam" id="PF00155">
    <property type="entry name" value="Aminotran_1_2"/>
    <property type="match status" value="1"/>
</dbReference>
<dbReference type="SUPFAM" id="SSF53383">
    <property type="entry name" value="PLP-dependent transferases"/>
    <property type="match status" value="1"/>
</dbReference>
<dbReference type="PROSITE" id="PS00105">
    <property type="entry name" value="AA_TRANSFER_CLASS_1"/>
    <property type="match status" value="1"/>
</dbReference>
<name>DAPAT_CHLTB</name>
<evidence type="ECO:0000255" key="1">
    <source>
        <dbReference type="HAMAP-Rule" id="MF_01642"/>
    </source>
</evidence>